<evidence type="ECO:0000255" key="1">
    <source>
        <dbReference type="HAMAP-Rule" id="MF_01031"/>
    </source>
</evidence>
<accession>Q62AI8</accession>
<comment type="function">
    <text evidence="1">Catalyzes the isomerization between 2-isopropylmalate and 3-isopropylmalate, via the formation of 2-isopropylmaleate.</text>
</comment>
<comment type="catalytic activity">
    <reaction evidence="1">
        <text>(2R,3S)-3-isopropylmalate = (2S)-2-isopropylmalate</text>
        <dbReference type="Rhea" id="RHEA:32287"/>
        <dbReference type="ChEBI" id="CHEBI:1178"/>
        <dbReference type="ChEBI" id="CHEBI:35121"/>
        <dbReference type="EC" id="4.2.1.33"/>
    </reaction>
</comment>
<comment type="pathway">
    <text evidence="1">Amino-acid biosynthesis; L-leucine biosynthesis; L-leucine from 3-methyl-2-oxobutanoate: step 2/4.</text>
</comment>
<comment type="subunit">
    <text evidence="1">Heterodimer of LeuC and LeuD.</text>
</comment>
<comment type="similarity">
    <text evidence="1">Belongs to the LeuD family. LeuD type 1 subfamily.</text>
</comment>
<reference key="1">
    <citation type="journal article" date="2004" name="Proc. Natl. Acad. Sci. U.S.A.">
        <title>Structural flexibility in the Burkholderia mallei genome.</title>
        <authorList>
            <person name="Nierman W.C."/>
            <person name="DeShazer D."/>
            <person name="Kim H.S."/>
            <person name="Tettelin H."/>
            <person name="Nelson K.E."/>
            <person name="Feldblyum T.V."/>
            <person name="Ulrich R.L."/>
            <person name="Ronning C.M."/>
            <person name="Brinkac L.M."/>
            <person name="Daugherty S.C."/>
            <person name="Davidsen T.D."/>
            <person name="DeBoy R.T."/>
            <person name="Dimitrov G."/>
            <person name="Dodson R.J."/>
            <person name="Durkin A.S."/>
            <person name="Gwinn M.L."/>
            <person name="Haft D.H."/>
            <person name="Khouri H.M."/>
            <person name="Kolonay J.F."/>
            <person name="Madupu R."/>
            <person name="Mohammoud Y."/>
            <person name="Nelson W.C."/>
            <person name="Radune D."/>
            <person name="Romero C.M."/>
            <person name="Sarria S."/>
            <person name="Selengut J."/>
            <person name="Shamblin C."/>
            <person name="Sullivan S.A."/>
            <person name="White O."/>
            <person name="Yu Y."/>
            <person name="Zafar N."/>
            <person name="Zhou L."/>
            <person name="Fraser C.M."/>
        </authorList>
    </citation>
    <scope>NUCLEOTIDE SEQUENCE [LARGE SCALE GENOMIC DNA]</scope>
    <source>
        <strain>ATCC 23344</strain>
    </source>
</reference>
<name>LEUD_BURMA</name>
<dbReference type="EC" id="4.2.1.33" evidence="1"/>
<dbReference type="EMBL" id="CP000011">
    <property type="protein sequence ID" value="AAU45710.1"/>
    <property type="molecule type" value="Genomic_DNA"/>
</dbReference>
<dbReference type="RefSeq" id="WP_004187882.1">
    <property type="nucleotide sequence ID" value="NC_006349.2"/>
</dbReference>
<dbReference type="RefSeq" id="YP_106290.1">
    <property type="nucleotide sequence ID" value="NC_006349.2"/>
</dbReference>
<dbReference type="SMR" id="Q62AI8"/>
<dbReference type="GeneID" id="93063904"/>
<dbReference type="KEGG" id="bma:BMAA1727"/>
<dbReference type="PATRIC" id="fig|243160.12.peg.5325"/>
<dbReference type="eggNOG" id="COG0066">
    <property type="taxonomic scope" value="Bacteria"/>
</dbReference>
<dbReference type="HOGENOM" id="CLU_081378_0_3_4"/>
<dbReference type="UniPathway" id="UPA00048">
    <property type="reaction ID" value="UER00071"/>
</dbReference>
<dbReference type="Proteomes" id="UP000006693">
    <property type="component" value="Chromosome 2"/>
</dbReference>
<dbReference type="GO" id="GO:0009316">
    <property type="term" value="C:3-isopropylmalate dehydratase complex"/>
    <property type="evidence" value="ECO:0007669"/>
    <property type="project" value="InterPro"/>
</dbReference>
<dbReference type="GO" id="GO:0003861">
    <property type="term" value="F:3-isopropylmalate dehydratase activity"/>
    <property type="evidence" value="ECO:0007669"/>
    <property type="project" value="UniProtKB-UniRule"/>
</dbReference>
<dbReference type="GO" id="GO:0009098">
    <property type="term" value="P:L-leucine biosynthetic process"/>
    <property type="evidence" value="ECO:0007669"/>
    <property type="project" value="UniProtKB-UniRule"/>
</dbReference>
<dbReference type="CDD" id="cd01577">
    <property type="entry name" value="IPMI_Swivel"/>
    <property type="match status" value="1"/>
</dbReference>
<dbReference type="FunFam" id="3.20.19.10:FF:000003">
    <property type="entry name" value="3-isopropylmalate dehydratase small subunit"/>
    <property type="match status" value="1"/>
</dbReference>
<dbReference type="Gene3D" id="3.20.19.10">
    <property type="entry name" value="Aconitase, domain 4"/>
    <property type="match status" value="1"/>
</dbReference>
<dbReference type="HAMAP" id="MF_01031">
    <property type="entry name" value="LeuD_type1"/>
    <property type="match status" value="1"/>
</dbReference>
<dbReference type="InterPro" id="IPR004431">
    <property type="entry name" value="3-IsopropMal_deHydase_ssu"/>
</dbReference>
<dbReference type="InterPro" id="IPR015928">
    <property type="entry name" value="Aconitase/3IPM_dehydase_swvl"/>
</dbReference>
<dbReference type="InterPro" id="IPR000573">
    <property type="entry name" value="AconitaseA/IPMdHydase_ssu_swvl"/>
</dbReference>
<dbReference type="InterPro" id="IPR033940">
    <property type="entry name" value="IPMI_Swivel"/>
</dbReference>
<dbReference type="InterPro" id="IPR050075">
    <property type="entry name" value="LeuD"/>
</dbReference>
<dbReference type="NCBIfam" id="TIGR00171">
    <property type="entry name" value="leuD"/>
    <property type="match status" value="1"/>
</dbReference>
<dbReference type="NCBIfam" id="NF002458">
    <property type="entry name" value="PRK01641.1"/>
    <property type="match status" value="1"/>
</dbReference>
<dbReference type="PANTHER" id="PTHR43345:SF5">
    <property type="entry name" value="3-ISOPROPYLMALATE DEHYDRATASE SMALL SUBUNIT"/>
    <property type="match status" value="1"/>
</dbReference>
<dbReference type="PANTHER" id="PTHR43345">
    <property type="entry name" value="3-ISOPROPYLMALATE DEHYDRATASE SMALL SUBUNIT 2-RELATED-RELATED"/>
    <property type="match status" value="1"/>
</dbReference>
<dbReference type="Pfam" id="PF00694">
    <property type="entry name" value="Aconitase_C"/>
    <property type="match status" value="1"/>
</dbReference>
<dbReference type="SUPFAM" id="SSF52016">
    <property type="entry name" value="LeuD/IlvD-like"/>
    <property type="match status" value="1"/>
</dbReference>
<gene>
    <name evidence="1" type="primary">leuD</name>
    <name type="ordered locus">BMAA1727</name>
</gene>
<protein>
    <recommendedName>
        <fullName evidence="1">3-isopropylmalate dehydratase small subunit</fullName>
        <ecNumber evidence="1">4.2.1.33</ecNumber>
    </recommendedName>
    <alternativeName>
        <fullName evidence="1">Alpha-IPM isomerase</fullName>
        <shortName evidence="1">IPMI</shortName>
    </alternativeName>
    <alternativeName>
        <fullName evidence="1">Isopropylmalate isomerase</fullName>
    </alternativeName>
</protein>
<proteinExistence type="inferred from homology"/>
<organism>
    <name type="scientific">Burkholderia mallei (strain ATCC 23344)</name>
    <dbReference type="NCBI Taxonomy" id="243160"/>
    <lineage>
        <taxon>Bacteria</taxon>
        <taxon>Pseudomonadati</taxon>
        <taxon>Pseudomonadota</taxon>
        <taxon>Betaproteobacteria</taxon>
        <taxon>Burkholderiales</taxon>
        <taxon>Burkholderiaceae</taxon>
        <taxon>Burkholderia</taxon>
        <taxon>pseudomallei group</taxon>
    </lineage>
</organism>
<sequence length="216" mass="24726">MEKFNVHTGVVAPLDRENVDTDAIIPKQFLKSIKRTGFGPNAFDEWRYLDHGEPGQDNSKRPLNPDFVLNQPRYQGASVLLARKNFGCGSSREHAPWALQQYGFRAIVAPSFADIFFNNCYKNGLLPIVLTEQQVDHLFNDTYAFNGYQLTIDLDAQVVRAPDGREYPFEITAFRKYCLLNGFDDIGLTLRHADKIRQFEAERLAKQPWLDNRLVG</sequence>
<feature type="chain" id="PRO_0000141805" description="3-isopropylmalate dehydratase small subunit">
    <location>
        <begin position="1"/>
        <end position="216"/>
    </location>
</feature>
<keyword id="KW-0028">Amino-acid biosynthesis</keyword>
<keyword id="KW-0100">Branched-chain amino acid biosynthesis</keyword>
<keyword id="KW-0432">Leucine biosynthesis</keyword>
<keyword id="KW-0456">Lyase</keyword>
<keyword id="KW-1185">Reference proteome</keyword>